<name>UNG_MYCS2</name>
<organism>
    <name type="scientific">Mycolicibacterium smegmatis (strain ATCC 700084 / mc(2)155)</name>
    <name type="common">Mycobacterium smegmatis</name>
    <dbReference type="NCBI Taxonomy" id="246196"/>
    <lineage>
        <taxon>Bacteria</taxon>
        <taxon>Bacillati</taxon>
        <taxon>Actinomycetota</taxon>
        <taxon>Actinomycetes</taxon>
        <taxon>Mycobacteriales</taxon>
        <taxon>Mycobacteriaceae</taxon>
        <taxon>Mycolicibacterium</taxon>
    </lineage>
</organism>
<dbReference type="EC" id="3.2.2.27" evidence="1"/>
<dbReference type="EMBL" id="CP000480">
    <property type="protein sequence ID" value="ABK71961.1"/>
    <property type="molecule type" value="Genomic_DNA"/>
</dbReference>
<dbReference type="EMBL" id="CP001663">
    <property type="protein sequence ID" value="AFP38807.1"/>
    <property type="molecule type" value="Genomic_DNA"/>
</dbReference>
<dbReference type="RefSeq" id="WP_003893765.1">
    <property type="nucleotide sequence ID" value="NZ_SIJM01000012.1"/>
</dbReference>
<dbReference type="RefSeq" id="YP_886739.1">
    <property type="nucleotide sequence ID" value="NC_008596.1"/>
</dbReference>
<dbReference type="SMR" id="A0QV01"/>
<dbReference type="STRING" id="246196.MSMEG_2399"/>
<dbReference type="PaxDb" id="246196-MSMEI_2339"/>
<dbReference type="KEGG" id="msb:LJ00_11930"/>
<dbReference type="KEGG" id="msg:MSMEI_2339"/>
<dbReference type="KEGG" id="msm:MSMEG_2399"/>
<dbReference type="PATRIC" id="fig|246196.19.peg.2363"/>
<dbReference type="eggNOG" id="COG0692">
    <property type="taxonomic scope" value="Bacteria"/>
</dbReference>
<dbReference type="OrthoDB" id="9804372at2"/>
<dbReference type="Proteomes" id="UP000000757">
    <property type="component" value="Chromosome"/>
</dbReference>
<dbReference type="Proteomes" id="UP000006158">
    <property type="component" value="Chromosome"/>
</dbReference>
<dbReference type="GO" id="GO:0005737">
    <property type="term" value="C:cytoplasm"/>
    <property type="evidence" value="ECO:0007669"/>
    <property type="project" value="UniProtKB-SubCell"/>
</dbReference>
<dbReference type="GO" id="GO:0004844">
    <property type="term" value="F:uracil DNA N-glycosylase activity"/>
    <property type="evidence" value="ECO:0007669"/>
    <property type="project" value="UniProtKB-UniRule"/>
</dbReference>
<dbReference type="GO" id="GO:0097510">
    <property type="term" value="P:base-excision repair, AP site formation via deaminated base removal"/>
    <property type="evidence" value="ECO:0007669"/>
    <property type="project" value="TreeGrafter"/>
</dbReference>
<dbReference type="CDD" id="cd10027">
    <property type="entry name" value="UDG-F1-like"/>
    <property type="match status" value="1"/>
</dbReference>
<dbReference type="FunFam" id="3.40.470.10:FF:000006">
    <property type="entry name" value="Uracil-DNA glycosylase"/>
    <property type="match status" value="1"/>
</dbReference>
<dbReference type="Gene3D" id="3.40.470.10">
    <property type="entry name" value="Uracil-DNA glycosylase-like domain"/>
    <property type="match status" value="1"/>
</dbReference>
<dbReference type="HAMAP" id="MF_00148">
    <property type="entry name" value="UDG"/>
    <property type="match status" value="1"/>
</dbReference>
<dbReference type="InterPro" id="IPR002043">
    <property type="entry name" value="UDG_fam1"/>
</dbReference>
<dbReference type="InterPro" id="IPR018085">
    <property type="entry name" value="Ura-DNA_Glyclase_AS"/>
</dbReference>
<dbReference type="InterPro" id="IPR005122">
    <property type="entry name" value="Uracil-DNA_glycosylase-like"/>
</dbReference>
<dbReference type="InterPro" id="IPR036895">
    <property type="entry name" value="Uracil-DNA_glycosylase-like_sf"/>
</dbReference>
<dbReference type="NCBIfam" id="NF003588">
    <property type="entry name" value="PRK05254.1-1"/>
    <property type="match status" value="1"/>
</dbReference>
<dbReference type="NCBIfam" id="NF003592">
    <property type="entry name" value="PRK05254.1-5"/>
    <property type="match status" value="1"/>
</dbReference>
<dbReference type="NCBIfam" id="TIGR00628">
    <property type="entry name" value="ung"/>
    <property type="match status" value="1"/>
</dbReference>
<dbReference type="PANTHER" id="PTHR11264">
    <property type="entry name" value="URACIL-DNA GLYCOSYLASE"/>
    <property type="match status" value="1"/>
</dbReference>
<dbReference type="PANTHER" id="PTHR11264:SF0">
    <property type="entry name" value="URACIL-DNA GLYCOSYLASE"/>
    <property type="match status" value="1"/>
</dbReference>
<dbReference type="Pfam" id="PF03167">
    <property type="entry name" value="UDG"/>
    <property type="match status" value="1"/>
</dbReference>
<dbReference type="SMART" id="SM00986">
    <property type="entry name" value="UDG"/>
    <property type="match status" value="1"/>
</dbReference>
<dbReference type="SMART" id="SM00987">
    <property type="entry name" value="UreE_C"/>
    <property type="match status" value="1"/>
</dbReference>
<dbReference type="SUPFAM" id="SSF52141">
    <property type="entry name" value="Uracil-DNA glycosylase-like"/>
    <property type="match status" value="1"/>
</dbReference>
<dbReference type="PROSITE" id="PS00130">
    <property type="entry name" value="U_DNA_GLYCOSYLASE"/>
    <property type="match status" value="1"/>
</dbReference>
<feature type="chain" id="PRO_1000009913" description="Uracil-DNA glycosylase">
    <location>
        <begin position="1"/>
        <end position="227"/>
    </location>
</feature>
<feature type="active site" description="Proton acceptor" evidence="1">
    <location>
        <position position="68"/>
    </location>
</feature>
<accession>A0QV01</accession>
<accession>I7FZX5</accession>
<gene>
    <name evidence="1" type="primary">ung</name>
    <name type="ordered locus">MSMEG_2399</name>
    <name type="ordered locus">MSMEI_2339</name>
</gene>
<evidence type="ECO:0000255" key="1">
    <source>
        <dbReference type="HAMAP-Rule" id="MF_00148"/>
    </source>
</evidence>
<reference key="1">
    <citation type="submission" date="2006-10" db="EMBL/GenBank/DDBJ databases">
        <authorList>
            <person name="Fleischmann R.D."/>
            <person name="Dodson R.J."/>
            <person name="Haft D.H."/>
            <person name="Merkel J.S."/>
            <person name="Nelson W.C."/>
            <person name="Fraser C.M."/>
        </authorList>
    </citation>
    <scope>NUCLEOTIDE SEQUENCE [LARGE SCALE GENOMIC DNA]</scope>
    <source>
        <strain>ATCC 700084 / mc(2)155</strain>
    </source>
</reference>
<reference key="2">
    <citation type="journal article" date="2007" name="Genome Biol.">
        <title>Interrupted coding sequences in Mycobacterium smegmatis: authentic mutations or sequencing errors?</title>
        <authorList>
            <person name="Deshayes C."/>
            <person name="Perrodou E."/>
            <person name="Gallien S."/>
            <person name="Euphrasie D."/>
            <person name="Schaeffer C."/>
            <person name="Van-Dorsselaer A."/>
            <person name="Poch O."/>
            <person name="Lecompte O."/>
            <person name="Reyrat J.-M."/>
        </authorList>
    </citation>
    <scope>NUCLEOTIDE SEQUENCE [LARGE SCALE GENOMIC DNA]</scope>
    <source>
        <strain>ATCC 700084 / mc(2)155</strain>
    </source>
</reference>
<reference key="3">
    <citation type="journal article" date="2009" name="Genome Res.">
        <title>Ortho-proteogenomics: multiple proteomes investigation through orthology and a new MS-based protocol.</title>
        <authorList>
            <person name="Gallien S."/>
            <person name="Perrodou E."/>
            <person name="Carapito C."/>
            <person name="Deshayes C."/>
            <person name="Reyrat J.-M."/>
            <person name="Van Dorsselaer A."/>
            <person name="Poch O."/>
            <person name="Schaeffer C."/>
            <person name="Lecompte O."/>
        </authorList>
    </citation>
    <scope>NUCLEOTIDE SEQUENCE [LARGE SCALE GENOMIC DNA]</scope>
    <source>
        <strain>ATCC 700084 / mc(2)155</strain>
    </source>
</reference>
<protein>
    <recommendedName>
        <fullName evidence="1">Uracil-DNA glycosylase</fullName>
        <shortName evidence="1">UDG</shortName>
        <ecNumber evidence="1">3.2.2.27</ecNumber>
    </recommendedName>
</protein>
<proteinExistence type="inferred from homology"/>
<comment type="function">
    <text evidence="1">Excises uracil residues from the DNA which can arise as a result of misincorporation of dUMP residues by DNA polymerase or due to deamination of cytosine.</text>
</comment>
<comment type="catalytic activity">
    <reaction evidence="1">
        <text>Hydrolyzes single-stranded DNA or mismatched double-stranded DNA and polynucleotides, releasing free uracil.</text>
        <dbReference type="EC" id="3.2.2.27"/>
    </reaction>
</comment>
<comment type="subcellular location">
    <subcellularLocation>
        <location evidence="1">Cytoplasm</location>
    </subcellularLocation>
</comment>
<comment type="similarity">
    <text evidence="1">Belongs to the uracil-DNA glycosylase (UDG) superfamily. UNG family.</text>
</comment>
<keyword id="KW-0963">Cytoplasm</keyword>
<keyword id="KW-0227">DNA damage</keyword>
<keyword id="KW-0234">DNA repair</keyword>
<keyword id="KW-0378">Hydrolase</keyword>
<keyword id="KW-1185">Reference proteome</keyword>
<sequence length="227" mass="24967">MTARPLNELVEEGWARALEPVADQVAQMGEFLRTELAEGRQYLPAGQNVLRAFTFPFDQVRVLIVGQDPYPTPGHAVGLSFSVAPDVRPLPRSLSNIFTEYTEDLGHPQPSSGDLTPWAERGVMLLNRVLTVRPGTPASHRGKGWEAVTECAIRALVAREQPLVAVLWGRDAATLKPMLAEGDCATIESPHPSPLSASRGFFGSRPFSRVNELLQRRGIEPIDWKLP</sequence>